<name>IGF2_NEOVI</name>
<accession>P41694</accession>
<feature type="signal peptide" evidence="1">
    <location>
        <begin position="1"/>
        <end position="24"/>
    </location>
</feature>
<feature type="chain" id="PRO_0000015722" description="Insulin-like growth factor 2">
    <location>
        <begin position="25"/>
        <end position="92"/>
    </location>
</feature>
<feature type="propeptide" id="PRO_0000015723" description="E peptide" evidence="1">
    <location>
        <begin position="93"/>
        <end position="129" status="greater than"/>
    </location>
</feature>
<feature type="peptide" id="PRO_0000370378" description="Preptin">
    <location>
        <begin position="94"/>
        <end position="127"/>
    </location>
</feature>
<feature type="region of interest" description="B">
    <location>
        <begin position="25"/>
        <end position="52"/>
    </location>
</feature>
<feature type="region of interest" description="C">
    <location>
        <begin position="53"/>
        <end position="65"/>
    </location>
</feature>
<feature type="region of interest" description="A">
    <location>
        <begin position="66"/>
        <end position="86"/>
    </location>
</feature>
<feature type="region of interest" description="D">
    <location>
        <begin position="87"/>
        <end position="92"/>
    </location>
</feature>
<feature type="site" description="Important for interaction with integrin" evidence="2">
    <location>
        <position position="48"/>
    </location>
</feature>
<feature type="site" description="Important for interaction with integrin" evidence="2">
    <location>
        <position position="58"/>
    </location>
</feature>
<feature type="site" description="Important for interaction with integrin" evidence="2">
    <location>
        <position position="61"/>
    </location>
</feature>
<feature type="site" description="Important for interaction with integrin" evidence="2">
    <location>
        <position position="62"/>
    </location>
</feature>
<feature type="disulfide bond" evidence="1">
    <location>
        <begin position="33"/>
        <end position="72"/>
    </location>
</feature>
<feature type="disulfide bond" evidence="1">
    <location>
        <begin position="45"/>
        <end position="85"/>
    </location>
</feature>
<feature type="disulfide bond" evidence="1">
    <location>
        <begin position="71"/>
        <end position="76"/>
    </location>
</feature>
<feature type="non-terminal residue">
    <location>
        <position position="129"/>
    </location>
</feature>
<sequence>MGVPMGKSLLAPLTFLALASCCFAAYRPSETLCGGELVDTLQFVCGDRGFYFSRPASRVSRRSSRGIVEECCFRSCDLALLETYCATPAKSERDVSTPPTVLPDNFPRYPVGKFFQYDTWKQSAQRLRR</sequence>
<keyword id="KW-0119">Carbohydrate metabolism</keyword>
<keyword id="KW-0165">Cleavage on pair of basic residues</keyword>
<keyword id="KW-1015">Disulfide bond</keyword>
<keyword id="KW-0313">Glucose metabolism</keyword>
<keyword id="KW-0339">Growth factor</keyword>
<keyword id="KW-0372">Hormone</keyword>
<keyword id="KW-0497">Mitogen</keyword>
<keyword id="KW-0892">Osteogenesis</keyword>
<keyword id="KW-1185">Reference proteome</keyword>
<keyword id="KW-0964">Secreted</keyword>
<keyword id="KW-0732">Signal</keyword>
<reference key="1">
    <citation type="journal article" date="1993" name="Gen. Comp. Endocrinol.">
        <title>Insulin-like growth factor II in the mink (Mustela vison): determination of a cDNA nucleotide sequence and developmental regulation of its expression.</title>
        <authorList>
            <person name="Ekstroem T.J."/>
            <person name="Baecklin B.M."/>
            <person name="Lindqvist Y."/>
            <person name="Engstroem W."/>
        </authorList>
    </citation>
    <scope>NUCLEOTIDE SEQUENCE [MRNA]</scope>
    <source>
        <tissue>Liver</tissue>
    </source>
</reference>
<comment type="function">
    <text evidence="2 3">The insulin-like growth factors possess growth-promoting activity (By similarity). Major fetal growth hormone in mammals. Plays a key role in regulating fetoplacental development. IGF2 is influenced by placental lactogen. Also involved in tissue differentiation. In adults, involved in glucose metabolism in adipose tissue, skeletal muscle and liver. Acts as a ligand for integrin which is required for IGF2 signaling. Positively regulates myogenic transcription factor MYOD1 function by facilitating the recruitment of transcriptional coactivators, thereby controlling muscle terminal differentiation (By similarity). Inhibits myoblast differentiation and modulates metabolism via increasing the mitochondrial respiration rate (By similarity).</text>
</comment>
<comment type="function">
    <text evidence="2 3">Preptin undergoes glucose-mediated co-secretion with insulin, and acts as a physiological amplifier of glucose-mediated insulin secretion. Exhibits osteogenic properties by increasing osteoblast mitogenic activity through phosphoactivation of MAPK1 and MAPK3.</text>
</comment>
<comment type="subunit">
    <text evidence="2 3">Interacts with MYORG; this interaction is required for IGF2 secretion. Interacts with integrins ITGAV:ITGB3 and ITGA6:ITGB4; integrin-binding is required for IGF2 signaling.</text>
</comment>
<comment type="subcellular location">
    <subcellularLocation>
        <location evidence="2 3">Secreted</location>
    </subcellularLocation>
</comment>
<comment type="PTM">
    <text evidence="2">Proteolytically processed by PCSK4, proIGF2 is cleaved at Arg-129 and Arg-92 to generate big-IGF2 and mature IGF2.</text>
</comment>
<comment type="miscellaneous">
    <text evidence="3">The IGF2 locus is imprinted. Paternal inherited gene is expressed, while the maternal inherited gene is imprinted, hence silenced.</text>
</comment>
<comment type="similarity">
    <text evidence="5">Belongs to the insulin family.</text>
</comment>
<organism>
    <name type="scientific">Neovison vison</name>
    <name type="common">American mink</name>
    <name type="synonym">Mustela vison</name>
    <dbReference type="NCBI Taxonomy" id="452646"/>
    <lineage>
        <taxon>Eukaryota</taxon>
        <taxon>Metazoa</taxon>
        <taxon>Chordata</taxon>
        <taxon>Craniata</taxon>
        <taxon>Vertebrata</taxon>
        <taxon>Euteleostomi</taxon>
        <taxon>Mammalia</taxon>
        <taxon>Eutheria</taxon>
        <taxon>Laurasiatheria</taxon>
        <taxon>Carnivora</taxon>
        <taxon>Caniformia</taxon>
        <taxon>Musteloidea</taxon>
        <taxon>Mustelidae</taxon>
        <taxon>Mustelinae</taxon>
        <taxon>Neogale</taxon>
    </lineage>
</organism>
<proteinExistence type="evidence at transcript level"/>
<gene>
    <name evidence="2" type="primary">IGF2</name>
    <name evidence="5" type="synonym">IGF-2</name>
</gene>
<evidence type="ECO:0000250" key="1"/>
<evidence type="ECO:0000250" key="2">
    <source>
        <dbReference type="UniProtKB" id="P01344"/>
    </source>
</evidence>
<evidence type="ECO:0000250" key="3">
    <source>
        <dbReference type="UniProtKB" id="P09535"/>
    </source>
</evidence>
<evidence type="ECO:0000303" key="4">
    <source>
    </source>
</evidence>
<evidence type="ECO:0000305" key="5"/>
<dbReference type="EMBL" id="S63459">
    <property type="protein sequence ID" value="AAB27392.2"/>
    <property type="molecule type" value="mRNA"/>
</dbReference>
<dbReference type="BMRB" id="P41694"/>
<dbReference type="SMR" id="P41694"/>
<dbReference type="Proteomes" id="UP000694425">
    <property type="component" value="Unplaced"/>
</dbReference>
<dbReference type="GO" id="GO:0005615">
    <property type="term" value="C:extracellular space"/>
    <property type="evidence" value="ECO:0007669"/>
    <property type="project" value="InterPro"/>
</dbReference>
<dbReference type="GO" id="GO:0008083">
    <property type="term" value="F:growth factor activity"/>
    <property type="evidence" value="ECO:0007669"/>
    <property type="project" value="UniProtKB-KW"/>
</dbReference>
<dbReference type="GO" id="GO:0005179">
    <property type="term" value="F:hormone activity"/>
    <property type="evidence" value="ECO:0007669"/>
    <property type="project" value="UniProtKB-KW"/>
</dbReference>
<dbReference type="GO" id="GO:0005159">
    <property type="term" value="F:insulin-like growth factor receptor binding"/>
    <property type="evidence" value="ECO:0007669"/>
    <property type="project" value="TreeGrafter"/>
</dbReference>
<dbReference type="GO" id="GO:0005178">
    <property type="term" value="F:integrin binding"/>
    <property type="evidence" value="ECO:0000250"/>
    <property type="project" value="UniProtKB"/>
</dbReference>
<dbReference type="GO" id="GO:0043539">
    <property type="term" value="F:protein serine/threonine kinase activator activity"/>
    <property type="evidence" value="ECO:0007669"/>
    <property type="project" value="TreeGrafter"/>
</dbReference>
<dbReference type="GO" id="GO:0001892">
    <property type="term" value="P:embryonic placenta development"/>
    <property type="evidence" value="ECO:0000250"/>
    <property type="project" value="UniProtKB"/>
</dbReference>
<dbReference type="GO" id="GO:0006006">
    <property type="term" value="P:glucose metabolic process"/>
    <property type="evidence" value="ECO:0007669"/>
    <property type="project" value="UniProtKB-KW"/>
</dbReference>
<dbReference type="GO" id="GO:0051148">
    <property type="term" value="P:negative regulation of muscle cell differentiation"/>
    <property type="evidence" value="ECO:0000250"/>
    <property type="project" value="UniProtKB"/>
</dbReference>
<dbReference type="GO" id="GO:0000122">
    <property type="term" value="P:negative regulation of transcription by RNA polymerase II"/>
    <property type="evidence" value="ECO:0000250"/>
    <property type="project" value="UniProtKB"/>
</dbReference>
<dbReference type="GO" id="GO:0001503">
    <property type="term" value="P:ossification"/>
    <property type="evidence" value="ECO:0007669"/>
    <property type="project" value="UniProtKB-KW"/>
</dbReference>
<dbReference type="GO" id="GO:0042104">
    <property type="term" value="P:positive regulation of activated T cell proliferation"/>
    <property type="evidence" value="ECO:0007669"/>
    <property type="project" value="TreeGrafter"/>
</dbReference>
<dbReference type="GO" id="GO:0051781">
    <property type="term" value="P:positive regulation of cell division"/>
    <property type="evidence" value="ECO:0007669"/>
    <property type="project" value="UniProtKB-KW"/>
</dbReference>
<dbReference type="GO" id="GO:0008284">
    <property type="term" value="P:positive regulation of cell population proliferation"/>
    <property type="evidence" value="ECO:0000250"/>
    <property type="project" value="UniProtKB"/>
</dbReference>
<dbReference type="GO" id="GO:0046628">
    <property type="term" value="P:positive regulation of insulin receptor signaling pathway"/>
    <property type="evidence" value="ECO:0007669"/>
    <property type="project" value="TreeGrafter"/>
</dbReference>
<dbReference type="GO" id="GO:0043410">
    <property type="term" value="P:positive regulation of MAPK cascade"/>
    <property type="evidence" value="ECO:0007669"/>
    <property type="project" value="TreeGrafter"/>
</dbReference>
<dbReference type="GO" id="GO:0045944">
    <property type="term" value="P:positive regulation of transcription by RNA polymerase II"/>
    <property type="evidence" value="ECO:0007669"/>
    <property type="project" value="TreeGrafter"/>
</dbReference>
<dbReference type="GO" id="GO:1905564">
    <property type="term" value="P:positive regulation of vascular endothelial cell proliferation"/>
    <property type="evidence" value="ECO:0007669"/>
    <property type="project" value="TreeGrafter"/>
</dbReference>
<dbReference type="GO" id="GO:0051147">
    <property type="term" value="P:regulation of muscle cell differentiation"/>
    <property type="evidence" value="ECO:0000250"/>
    <property type="project" value="UniProtKB"/>
</dbReference>
<dbReference type="CDD" id="cd04368">
    <property type="entry name" value="IlGF"/>
    <property type="match status" value="1"/>
</dbReference>
<dbReference type="FunFam" id="1.10.100.10:FF:000002">
    <property type="entry name" value="Insulin-like growth factor II preproprotein"/>
    <property type="match status" value="1"/>
</dbReference>
<dbReference type="Gene3D" id="1.10.100.10">
    <property type="entry name" value="Insulin-like"/>
    <property type="match status" value="1"/>
</dbReference>
<dbReference type="InterPro" id="IPR022334">
    <property type="entry name" value="IGF2"/>
</dbReference>
<dbReference type="InterPro" id="IPR016179">
    <property type="entry name" value="Insulin-like"/>
</dbReference>
<dbReference type="InterPro" id="IPR022350">
    <property type="entry name" value="Insulin-like_growth_factor"/>
</dbReference>
<dbReference type="InterPro" id="IPR036438">
    <property type="entry name" value="Insulin-like_sf"/>
</dbReference>
<dbReference type="InterPro" id="IPR022353">
    <property type="entry name" value="Insulin_CS"/>
</dbReference>
<dbReference type="InterPro" id="IPR022352">
    <property type="entry name" value="Insulin_family"/>
</dbReference>
<dbReference type="PANTHER" id="PTHR46886">
    <property type="entry name" value="INSULIN-LIKE GROWTH FACTOR II"/>
    <property type="match status" value="1"/>
</dbReference>
<dbReference type="PANTHER" id="PTHR46886:SF1">
    <property type="entry name" value="INSULIN-LIKE GROWTH FACTOR II"/>
    <property type="match status" value="1"/>
</dbReference>
<dbReference type="Pfam" id="PF00049">
    <property type="entry name" value="Insulin"/>
    <property type="match status" value="2"/>
</dbReference>
<dbReference type="PRINTS" id="PR02002">
    <property type="entry name" value="INSLNLIKEGF"/>
</dbReference>
<dbReference type="PRINTS" id="PR02006">
    <property type="entry name" value="INSLNLIKEGF2"/>
</dbReference>
<dbReference type="PRINTS" id="PR00276">
    <property type="entry name" value="INSULINFAMLY"/>
</dbReference>
<dbReference type="SMART" id="SM00078">
    <property type="entry name" value="IlGF"/>
    <property type="match status" value="1"/>
</dbReference>
<dbReference type="SUPFAM" id="SSF56994">
    <property type="entry name" value="Insulin-like"/>
    <property type="match status" value="1"/>
</dbReference>
<dbReference type="PROSITE" id="PS00262">
    <property type="entry name" value="INSULIN"/>
    <property type="match status" value="1"/>
</dbReference>
<protein>
    <recommendedName>
        <fullName evidence="2">Insulin-like growth factor 2</fullName>
    </recommendedName>
    <alternativeName>
        <fullName evidence="4">Insulin-like growth factor II</fullName>
        <shortName evidence="4">IGF-II</shortName>
    </alternativeName>
    <component>
        <recommendedName>
            <fullName evidence="2">Preptin</fullName>
        </recommendedName>
    </component>
</protein>